<reference key="1">
    <citation type="submission" date="2009-07" db="EMBL/GenBank/DDBJ databases">
        <title>Complete sequence of Pectobacterium carotovorum subsp. carotovorum PC1.</title>
        <authorList>
            <consortium name="US DOE Joint Genome Institute"/>
            <person name="Lucas S."/>
            <person name="Copeland A."/>
            <person name="Lapidus A."/>
            <person name="Glavina del Rio T."/>
            <person name="Tice H."/>
            <person name="Bruce D."/>
            <person name="Goodwin L."/>
            <person name="Pitluck S."/>
            <person name="Munk A.C."/>
            <person name="Brettin T."/>
            <person name="Detter J.C."/>
            <person name="Han C."/>
            <person name="Tapia R."/>
            <person name="Larimer F."/>
            <person name="Land M."/>
            <person name="Hauser L."/>
            <person name="Kyrpides N."/>
            <person name="Mikhailova N."/>
            <person name="Balakrishnan V."/>
            <person name="Glasner J."/>
            <person name="Perna N.T."/>
        </authorList>
    </citation>
    <scope>NUCLEOTIDE SEQUENCE [LARGE SCALE GENOMIC DNA]</scope>
    <source>
        <strain>PC1</strain>
    </source>
</reference>
<protein>
    <recommendedName>
        <fullName evidence="1">Ribosome-binding factor A</fullName>
    </recommendedName>
</protein>
<dbReference type="EMBL" id="CP001657">
    <property type="protein sequence ID" value="ACT11641.1"/>
    <property type="molecule type" value="Genomic_DNA"/>
</dbReference>
<dbReference type="RefSeq" id="WP_012773289.1">
    <property type="nucleotide sequence ID" value="NC_012917.1"/>
</dbReference>
<dbReference type="SMR" id="C6DKK4"/>
<dbReference type="STRING" id="561230.PC1_0586"/>
<dbReference type="KEGG" id="pct:PC1_0586"/>
<dbReference type="eggNOG" id="COG0858">
    <property type="taxonomic scope" value="Bacteria"/>
</dbReference>
<dbReference type="HOGENOM" id="CLU_089475_5_0_6"/>
<dbReference type="OrthoDB" id="307788at2"/>
<dbReference type="Proteomes" id="UP000002736">
    <property type="component" value="Chromosome"/>
</dbReference>
<dbReference type="GO" id="GO:0005829">
    <property type="term" value="C:cytosol"/>
    <property type="evidence" value="ECO:0007669"/>
    <property type="project" value="TreeGrafter"/>
</dbReference>
<dbReference type="GO" id="GO:0043024">
    <property type="term" value="F:ribosomal small subunit binding"/>
    <property type="evidence" value="ECO:0007669"/>
    <property type="project" value="TreeGrafter"/>
</dbReference>
<dbReference type="GO" id="GO:0030490">
    <property type="term" value="P:maturation of SSU-rRNA"/>
    <property type="evidence" value="ECO:0007669"/>
    <property type="project" value="UniProtKB-UniRule"/>
</dbReference>
<dbReference type="FunFam" id="3.30.300.20:FF:000007">
    <property type="entry name" value="Ribosome-binding factor A"/>
    <property type="match status" value="1"/>
</dbReference>
<dbReference type="Gene3D" id="3.30.300.20">
    <property type="match status" value="1"/>
</dbReference>
<dbReference type="HAMAP" id="MF_00003">
    <property type="entry name" value="RbfA"/>
    <property type="match status" value="1"/>
</dbReference>
<dbReference type="InterPro" id="IPR015946">
    <property type="entry name" value="KH_dom-like_a/b"/>
</dbReference>
<dbReference type="InterPro" id="IPR000238">
    <property type="entry name" value="RbfA"/>
</dbReference>
<dbReference type="InterPro" id="IPR023799">
    <property type="entry name" value="RbfA_dom_sf"/>
</dbReference>
<dbReference type="InterPro" id="IPR020053">
    <property type="entry name" value="Ribosome-bd_factorA_CS"/>
</dbReference>
<dbReference type="NCBIfam" id="TIGR00082">
    <property type="entry name" value="rbfA"/>
    <property type="match status" value="1"/>
</dbReference>
<dbReference type="PANTHER" id="PTHR33515">
    <property type="entry name" value="RIBOSOME-BINDING FACTOR A, CHLOROPLASTIC-RELATED"/>
    <property type="match status" value="1"/>
</dbReference>
<dbReference type="PANTHER" id="PTHR33515:SF1">
    <property type="entry name" value="RIBOSOME-BINDING FACTOR A, CHLOROPLASTIC-RELATED"/>
    <property type="match status" value="1"/>
</dbReference>
<dbReference type="Pfam" id="PF02033">
    <property type="entry name" value="RBFA"/>
    <property type="match status" value="1"/>
</dbReference>
<dbReference type="SUPFAM" id="SSF89919">
    <property type="entry name" value="Ribosome-binding factor A, RbfA"/>
    <property type="match status" value="1"/>
</dbReference>
<dbReference type="PROSITE" id="PS01319">
    <property type="entry name" value="RBFA"/>
    <property type="match status" value="1"/>
</dbReference>
<organism>
    <name type="scientific">Pectobacterium carotovorum subsp. carotovorum (strain PC1)</name>
    <dbReference type="NCBI Taxonomy" id="561230"/>
    <lineage>
        <taxon>Bacteria</taxon>
        <taxon>Pseudomonadati</taxon>
        <taxon>Pseudomonadota</taxon>
        <taxon>Gammaproteobacteria</taxon>
        <taxon>Enterobacterales</taxon>
        <taxon>Pectobacteriaceae</taxon>
        <taxon>Pectobacterium</taxon>
    </lineage>
</organism>
<proteinExistence type="inferred from homology"/>
<accession>C6DKK4</accession>
<comment type="function">
    <text evidence="1">One of several proteins that assist in the late maturation steps of the functional core of the 30S ribosomal subunit. Associates with free 30S ribosomal subunits (but not with 30S subunits that are part of 70S ribosomes or polysomes). Required for efficient processing of 16S rRNA. May interact with the 5'-terminal helix region of 16S rRNA.</text>
</comment>
<comment type="subunit">
    <text evidence="1">Monomer. Binds 30S ribosomal subunits, but not 50S ribosomal subunits or 70S ribosomes.</text>
</comment>
<comment type="subcellular location">
    <subcellularLocation>
        <location evidence="1">Cytoplasm</location>
    </subcellularLocation>
</comment>
<comment type="similarity">
    <text evidence="1">Belongs to the RbfA family.</text>
</comment>
<feature type="chain" id="PRO_1000201646" description="Ribosome-binding factor A">
    <location>
        <begin position="1"/>
        <end position="132"/>
    </location>
</feature>
<gene>
    <name evidence="1" type="primary">rbfA</name>
    <name type="ordered locus">PC1_0586</name>
</gene>
<name>RBFA_PECCP</name>
<keyword id="KW-0963">Cytoplasm</keyword>
<keyword id="KW-0690">Ribosome biogenesis</keyword>
<sequence length="132" mass="14867">MAKEFSRTQRVAQEMQKEIAIIIQREVKDPRIGMATVSGVEVSRDLAYAKVFVTFLNDNEPEQVKTALKALQDASGFIRTLVGKAMRLRVVPALTFSYDNSLVEGMRMSNLVTNVVRNDTERRSVTGEDQED</sequence>
<evidence type="ECO:0000255" key="1">
    <source>
        <dbReference type="HAMAP-Rule" id="MF_00003"/>
    </source>
</evidence>